<sequence>MSIMDERLLSGESAYEDADLEYSLRPQTLRQYIGQDKAKHNLEVFIEAAKMREETLDHVLLYGPPGLGKTTLANIIANEMGVNVRTTSGPAIERPGDLAAVLTSLQPGDVLFIDEIHRLHRSIEEVLYPAMEDFCLDIVIGKGPSARSVRLDLPPFTLVGATTRAGALSAPLRDRFGVLSRLEYYTVDQLSAIVERTGEVFEVEINSLAALEIARRARGTPRIANRLLRRVRDFAQVRGNGTVTMEITQMALELLQVDKLGLDHIDHKLLLGIIEKFRGGPVGLETVSATIGEESHTIEDVYEPYLLQIGFLQRTPRGRIVTPLAYEHFGMEMPKV</sequence>
<proteinExistence type="inferred from homology"/>
<feature type="chain" id="PRO_1000001363" description="Holliday junction branch migration complex subunit RuvB">
    <location>
        <begin position="1"/>
        <end position="336"/>
    </location>
</feature>
<feature type="region of interest" description="Large ATPase domain (RuvB-L)" evidence="1">
    <location>
        <begin position="4"/>
        <end position="185"/>
    </location>
</feature>
<feature type="region of interest" description="Small ATPAse domain (RuvB-S)" evidence="1">
    <location>
        <begin position="186"/>
        <end position="256"/>
    </location>
</feature>
<feature type="region of interest" description="Head domain (RuvB-H)" evidence="1">
    <location>
        <begin position="259"/>
        <end position="336"/>
    </location>
</feature>
<feature type="binding site" evidence="1">
    <location>
        <position position="24"/>
    </location>
    <ligand>
        <name>ATP</name>
        <dbReference type="ChEBI" id="CHEBI:30616"/>
    </ligand>
</feature>
<feature type="binding site" evidence="1">
    <location>
        <position position="25"/>
    </location>
    <ligand>
        <name>ATP</name>
        <dbReference type="ChEBI" id="CHEBI:30616"/>
    </ligand>
</feature>
<feature type="binding site" evidence="1">
    <location>
        <position position="66"/>
    </location>
    <ligand>
        <name>ATP</name>
        <dbReference type="ChEBI" id="CHEBI:30616"/>
    </ligand>
</feature>
<feature type="binding site" evidence="1">
    <location>
        <position position="69"/>
    </location>
    <ligand>
        <name>ATP</name>
        <dbReference type="ChEBI" id="CHEBI:30616"/>
    </ligand>
</feature>
<feature type="binding site" evidence="1">
    <location>
        <position position="70"/>
    </location>
    <ligand>
        <name>ATP</name>
        <dbReference type="ChEBI" id="CHEBI:30616"/>
    </ligand>
</feature>
<feature type="binding site" evidence="1">
    <location>
        <position position="70"/>
    </location>
    <ligand>
        <name>Mg(2+)</name>
        <dbReference type="ChEBI" id="CHEBI:18420"/>
    </ligand>
</feature>
<feature type="binding site" evidence="1">
    <location>
        <position position="71"/>
    </location>
    <ligand>
        <name>ATP</name>
        <dbReference type="ChEBI" id="CHEBI:30616"/>
    </ligand>
</feature>
<feature type="binding site" evidence="1">
    <location>
        <begin position="132"/>
        <end position="134"/>
    </location>
    <ligand>
        <name>ATP</name>
        <dbReference type="ChEBI" id="CHEBI:30616"/>
    </ligand>
</feature>
<feature type="binding site" evidence="1">
    <location>
        <position position="175"/>
    </location>
    <ligand>
        <name>ATP</name>
        <dbReference type="ChEBI" id="CHEBI:30616"/>
    </ligand>
</feature>
<feature type="binding site" evidence="1">
    <location>
        <position position="185"/>
    </location>
    <ligand>
        <name>ATP</name>
        <dbReference type="ChEBI" id="CHEBI:30616"/>
    </ligand>
</feature>
<feature type="binding site" evidence="1">
    <location>
        <position position="222"/>
    </location>
    <ligand>
        <name>ATP</name>
        <dbReference type="ChEBI" id="CHEBI:30616"/>
    </ligand>
</feature>
<feature type="binding site" evidence="1">
    <location>
        <position position="314"/>
    </location>
    <ligand>
        <name>DNA</name>
        <dbReference type="ChEBI" id="CHEBI:16991"/>
    </ligand>
</feature>
<feature type="binding site" evidence="1">
    <location>
        <position position="319"/>
    </location>
    <ligand>
        <name>DNA</name>
        <dbReference type="ChEBI" id="CHEBI:16991"/>
    </ligand>
</feature>
<gene>
    <name evidence="1" type="primary">ruvB</name>
    <name type="ordered locus">BALH_3999</name>
</gene>
<protein>
    <recommendedName>
        <fullName evidence="1">Holliday junction branch migration complex subunit RuvB</fullName>
        <ecNumber evidence="1">3.6.4.-</ecNumber>
    </recommendedName>
</protein>
<name>RUVB_BACAH</name>
<keyword id="KW-0067">ATP-binding</keyword>
<keyword id="KW-0963">Cytoplasm</keyword>
<keyword id="KW-0227">DNA damage</keyword>
<keyword id="KW-0233">DNA recombination</keyword>
<keyword id="KW-0234">DNA repair</keyword>
<keyword id="KW-0238">DNA-binding</keyword>
<keyword id="KW-0378">Hydrolase</keyword>
<keyword id="KW-0547">Nucleotide-binding</keyword>
<reference key="1">
    <citation type="journal article" date="2007" name="J. Bacteriol.">
        <title>The complete genome sequence of Bacillus thuringiensis Al Hakam.</title>
        <authorList>
            <person name="Challacombe J.F."/>
            <person name="Altherr M.R."/>
            <person name="Xie G."/>
            <person name="Bhotika S.S."/>
            <person name="Brown N."/>
            <person name="Bruce D."/>
            <person name="Campbell C.S."/>
            <person name="Campbell M.L."/>
            <person name="Chen J."/>
            <person name="Chertkov O."/>
            <person name="Cleland C."/>
            <person name="Dimitrijevic M."/>
            <person name="Doggett N.A."/>
            <person name="Fawcett J.J."/>
            <person name="Glavina T."/>
            <person name="Goodwin L.A."/>
            <person name="Green L.D."/>
            <person name="Han C.S."/>
            <person name="Hill K.K."/>
            <person name="Hitchcock P."/>
            <person name="Jackson P.J."/>
            <person name="Keim P."/>
            <person name="Kewalramani A.R."/>
            <person name="Longmire J."/>
            <person name="Lucas S."/>
            <person name="Malfatti S."/>
            <person name="Martinez D."/>
            <person name="McMurry K."/>
            <person name="Meincke L.J."/>
            <person name="Misra M."/>
            <person name="Moseman B.L."/>
            <person name="Mundt M."/>
            <person name="Munk A.C."/>
            <person name="Okinaka R.T."/>
            <person name="Parson-Quintana B."/>
            <person name="Reilly L.P."/>
            <person name="Richardson P."/>
            <person name="Robinson D.L."/>
            <person name="Saunders E."/>
            <person name="Tapia R."/>
            <person name="Tesmer J.G."/>
            <person name="Thayer N."/>
            <person name="Thompson L.S."/>
            <person name="Tice H."/>
            <person name="Ticknor L.O."/>
            <person name="Wills P.L."/>
            <person name="Gilna P."/>
            <person name="Brettin T.S."/>
        </authorList>
    </citation>
    <scope>NUCLEOTIDE SEQUENCE [LARGE SCALE GENOMIC DNA]</scope>
    <source>
        <strain>Al Hakam</strain>
    </source>
</reference>
<accession>A0RJ26</accession>
<organism>
    <name type="scientific">Bacillus thuringiensis (strain Al Hakam)</name>
    <dbReference type="NCBI Taxonomy" id="412694"/>
    <lineage>
        <taxon>Bacteria</taxon>
        <taxon>Bacillati</taxon>
        <taxon>Bacillota</taxon>
        <taxon>Bacilli</taxon>
        <taxon>Bacillales</taxon>
        <taxon>Bacillaceae</taxon>
        <taxon>Bacillus</taxon>
        <taxon>Bacillus cereus group</taxon>
    </lineage>
</organism>
<dbReference type="EC" id="3.6.4.-" evidence="1"/>
<dbReference type="EMBL" id="CP000485">
    <property type="protein sequence ID" value="ABK87219.1"/>
    <property type="molecule type" value="Genomic_DNA"/>
</dbReference>
<dbReference type="SMR" id="A0RJ26"/>
<dbReference type="KEGG" id="btl:BALH_3999"/>
<dbReference type="HOGENOM" id="CLU_055599_1_0_9"/>
<dbReference type="GO" id="GO:0005737">
    <property type="term" value="C:cytoplasm"/>
    <property type="evidence" value="ECO:0007669"/>
    <property type="project" value="UniProtKB-SubCell"/>
</dbReference>
<dbReference type="GO" id="GO:0048476">
    <property type="term" value="C:Holliday junction resolvase complex"/>
    <property type="evidence" value="ECO:0007669"/>
    <property type="project" value="UniProtKB-UniRule"/>
</dbReference>
<dbReference type="GO" id="GO:0005524">
    <property type="term" value="F:ATP binding"/>
    <property type="evidence" value="ECO:0007669"/>
    <property type="project" value="UniProtKB-UniRule"/>
</dbReference>
<dbReference type="GO" id="GO:0016887">
    <property type="term" value="F:ATP hydrolysis activity"/>
    <property type="evidence" value="ECO:0007669"/>
    <property type="project" value="InterPro"/>
</dbReference>
<dbReference type="GO" id="GO:0000400">
    <property type="term" value="F:four-way junction DNA binding"/>
    <property type="evidence" value="ECO:0007669"/>
    <property type="project" value="UniProtKB-UniRule"/>
</dbReference>
<dbReference type="GO" id="GO:0009378">
    <property type="term" value="F:four-way junction helicase activity"/>
    <property type="evidence" value="ECO:0007669"/>
    <property type="project" value="InterPro"/>
</dbReference>
<dbReference type="GO" id="GO:0006310">
    <property type="term" value="P:DNA recombination"/>
    <property type="evidence" value="ECO:0007669"/>
    <property type="project" value="UniProtKB-UniRule"/>
</dbReference>
<dbReference type="GO" id="GO:0006281">
    <property type="term" value="P:DNA repair"/>
    <property type="evidence" value="ECO:0007669"/>
    <property type="project" value="UniProtKB-UniRule"/>
</dbReference>
<dbReference type="CDD" id="cd00009">
    <property type="entry name" value="AAA"/>
    <property type="match status" value="1"/>
</dbReference>
<dbReference type="Gene3D" id="1.10.8.60">
    <property type="match status" value="1"/>
</dbReference>
<dbReference type="Gene3D" id="3.40.50.300">
    <property type="entry name" value="P-loop containing nucleotide triphosphate hydrolases"/>
    <property type="match status" value="1"/>
</dbReference>
<dbReference type="Gene3D" id="1.10.10.10">
    <property type="entry name" value="Winged helix-like DNA-binding domain superfamily/Winged helix DNA-binding domain"/>
    <property type="match status" value="1"/>
</dbReference>
<dbReference type="HAMAP" id="MF_00016">
    <property type="entry name" value="DNA_HJ_migration_RuvB"/>
    <property type="match status" value="1"/>
</dbReference>
<dbReference type="InterPro" id="IPR003593">
    <property type="entry name" value="AAA+_ATPase"/>
</dbReference>
<dbReference type="InterPro" id="IPR041445">
    <property type="entry name" value="AAA_lid_4"/>
</dbReference>
<dbReference type="InterPro" id="IPR004605">
    <property type="entry name" value="DNA_helicase_Holl-junc_RuvB"/>
</dbReference>
<dbReference type="InterPro" id="IPR027417">
    <property type="entry name" value="P-loop_NTPase"/>
</dbReference>
<dbReference type="InterPro" id="IPR008824">
    <property type="entry name" value="RuvB-like_N"/>
</dbReference>
<dbReference type="InterPro" id="IPR008823">
    <property type="entry name" value="RuvB_C"/>
</dbReference>
<dbReference type="InterPro" id="IPR036388">
    <property type="entry name" value="WH-like_DNA-bd_sf"/>
</dbReference>
<dbReference type="InterPro" id="IPR036390">
    <property type="entry name" value="WH_DNA-bd_sf"/>
</dbReference>
<dbReference type="NCBIfam" id="NF000868">
    <property type="entry name" value="PRK00080.1"/>
    <property type="match status" value="1"/>
</dbReference>
<dbReference type="NCBIfam" id="TIGR00635">
    <property type="entry name" value="ruvB"/>
    <property type="match status" value="1"/>
</dbReference>
<dbReference type="PANTHER" id="PTHR42848">
    <property type="match status" value="1"/>
</dbReference>
<dbReference type="PANTHER" id="PTHR42848:SF1">
    <property type="entry name" value="HOLLIDAY JUNCTION BRANCH MIGRATION COMPLEX SUBUNIT RUVB"/>
    <property type="match status" value="1"/>
</dbReference>
<dbReference type="Pfam" id="PF17864">
    <property type="entry name" value="AAA_lid_4"/>
    <property type="match status" value="1"/>
</dbReference>
<dbReference type="Pfam" id="PF05491">
    <property type="entry name" value="RuvB_C"/>
    <property type="match status" value="1"/>
</dbReference>
<dbReference type="Pfam" id="PF05496">
    <property type="entry name" value="RuvB_N"/>
    <property type="match status" value="1"/>
</dbReference>
<dbReference type="SMART" id="SM00382">
    <property type="entry name" value="AAA"/>
    <property type="match status" value="1"/>
</dbReference>
<dbReference type="SUPFAM" id="SSF52540">
    <property type="entry name" value="P-loop containing nucleoside triphosphate hydrolases"/>
    <property type="match status" value="1"/>
</dbReference>
<dbReference type="SUPFAM" id="SSF46785">
    <property type="entry name" value="Winged helix' DNA-binding domain"/>
    <property type="match status" value="1"/>
</dbReference>
<comment type="function">
    <text evidence="1">The RuvA-RuvB-RuvC complex processes Holliday junction (HJ) DNA during genetic recombination and DNA repair, while the RuvA-RuvB complex plays an important role in the rescue of blocked DNA replication forks via replication fork reversal (RFR). RuvA specifically binds to HJ cruciform DNA, conferring on it an open structure. The RuvB hexamer acts as an ATP-dependent pump, pulling dsDNA into and through the RuvAB complex. RuvB forms 2 homohexamers on either side of HJ DNA bound by 1 or 2 RuvA tetramers; 4 subunits per hexamer contact DNA at a time. Coordinated motions by a converter formed by DNA-disengaged RuvB subunits stimulates ATP hydrolysis and nucleotide exchange. Immobilization of the converter enables RuvB to convert the ATP-contained energy into a lever motion, pulling 2 nucleotides of DNA out of the RuvA tetramer per ATP hydrolyzed, thus driving DNA branch migration. The RuvB motors rotate together with the DNA substrate, which together with the progressing nucleotide cycle form the mechanistic basis for DNA recombination by continuous HJ branch migration. Branch migration allows RuvC to scan DNA until it finds its consensus sequence, where it cleaves and resolves cruciform DNA.</text>
</comment>
<comment type="catalytic activity">
    <reaction evidence="1">
        <text>ATP + H2O = ADP + phosphate + H(+)</text>
        <dbReference type="Rhea" id="RHEA:13065"/>
        <dbReference type="ChEBI" id="CHEBI:15377"/>
        <dbReference type="ChEBI" id="CHEBI:15378"/>
        <dbReference type="ChEBI" id="CHEBI:30616"/>
        <dbReference type="ChEBI" id="CHEBI:43474"/>
        <dbReference type="ChEBI" id="CHEBI:456216"/>
    </reaction>
</comment>
<comment type="subunit">
    <text evidence="1">Homohexamer. Forms an RuvA(8)-RuvB(12)-Holliday junction (HJ) complex. HJ DNA is sandwiched between 2 RuvA tetramers; dsDNA enters through RuvA and exits via RuvB. An RuvB hexamer assembles on each DNA strand where it exits the tetramer. Each RuvB hexamer is contacted by two RuvA subunits (via domain III) on 2 adjacent RuvB subunits; this complex drives branch migration. In the full resolvosome a probable DNA-RuvA(4)-RuvB(12)-RuvC(2) complex forms which resolves the HJ.</text>
</comment>
<comment type="subcellular location">
    <subcellularLocation>
        <location evidence="1">Cytoplasm</location>
    </subcellularLocation>
</comment>
<comment type="domain">
    <text evidence="1">Has 3 domains, the large (RuvB-L) and small ATPase (RuvB-S) domains and the C-terminal head (RuvB-H) domain. The head domain binds DNA, while the ATPase domains jointly bind ATP, ADP or are empty depending on the state of the subunit in the translocation cycle. During a single DNA translocation step the structure of each domain remains the same, but their relative positions change.</text>
</comment>
<comment type="similarity">
    <text evidence="1">Belongs to the RuvB family.</text>
</comment>
<evidence type="ECO:0000255" key="1">
    <source>
        <dbReference type="HAMAP-Rule" id="MF_00016"/>
    </source>
</evidence>